<accession>B2ACV0</accession>
<accession>A0A090CNE2</accession>
<name>GFA_PODAN</name>
<protein>
    <recommendedName>
        <fullName evidence="1">Putative glutathione-dependent formaldehyde-activating enzyme</fullName>
        <ecNumber evidence="1">4.4.1.22</ecNumber>
    </recommendedName>
    <alternativeName>
        <fullName evidence="1">S-(hydroxymethyl)glutathione synthase</fullName>
    </alternativeName>
</protein>
<evidence type="ECO:0000255" key="1">
    <source>
        <dbReference type="HAMAP-Rule" id="MF_03142"/>
    </source>
</evidence>
<evidence type="ECO:0000255" key="2">
    <source>
        <dbReference type="PROSITE-ProRule" id="PRU01239"/>
    </source>
</evidence>
<evidence type="ECO:0000305" key="3"/>
<feature type="chain" id="PRO_0000406163" description="Putative glutathione-dependent formaldehyde-activating enzyme">
    <location>
        <begin position="1"/>
        <end position="213"/>
    </location>
</feature>
<feature type="domain" description="CENP-V/GFA" evidence="2">
    <location>
        <begin position="19"/>
        <end position="165"/>
    </location>
</feature>
<feature type="binding site" evidence="1 2">
    <location>
        <position position="26"/>
    </location>
    <ligand>
        <name>Zn(2+)</name>
        <dbReference type="ChEBI" id="CHEBI:29105"/>
        <label>1</label>
        <note>structural</note>
    </ligand>
</feature>
<feature type="binding site" evidence="1 2">
    <location>
        <position position="28"/>
    </location>
    <ligand>
        <name>Zn(2+)</name>
        <dbReference type="ChEBI" id="CHEBI:29105"/>
        <label>1</label>
        <note>structural</note>
    </ligand>
</feature>
<feature type="binding site" evidence="1 2">
    <location>
        <position position="47"/>
    </location>
    <ligand>
        <name>Zn(2+)</name>
        <dbReference type="ChEBI" id="CHEBI:29105"/>
        <label>2</label>
        <note>catalytic</note>
    </ligand>
</feature>
<feature type="binding site" evidence="1 2">
    <location>
        <position position="49"/>
    </location>
    <ligand>
        <name>Zn(2+)</name>
        <dbReference type="ChEBI" id="CHEBI:29105"/>
        <label>2</label>
        <note>catalytic</note>
    </ligand>
</feature>
<feature type="binding site" evidence="1 2">
    <location>
        <position position="52"/>
    </location>
    <ligand>
        <name>Zn(2+)</name>
        <dbReference type="ChEBI" id="CHEBI:29105"/>
        <label>2</label>
        <note>catalytic</note>
    </ligand>
</feature>
<feature type="binding site" evidence="1 2">
    <location>
        <position position="94"/>
    </location>
    <ligand>
        <name>Zn(2+)</name>
        <dbReference type="ChEBI" id="CHEBI:29105"/>
        <label>1</label>
        <note>structural</note>
    </ligand>
</feature>
<feature type="binding site" evidence="1 2">
    <location>
        <position position="97"/>
    </location>
    <ligand>
        <name>Zn(2+)</name>
        <dbReference type="ChEBI" id="CHEBI:29105"/>
        <label>1</label>
        <note>structural</note>
    </ligand>
</feature>
<dbReference type="EC" id="4.4.1.22" evidence="1"/>
<dbReference type="EMBL" id="CU633453">
    <property type="protein sequence ID" value="CAP61265.1"/>
    <property type="status" value="ALT_SEQ"/>
    <property type="molecule type" value="Genomic_DNA"/>
</dbReference>
<dbReference type="EMBL" id="FO904938">
    <property type="protein sequence ID" value="CDP27619.1"/>
    <property type="status" value="ALT_INIT"/>
    <property type="molecule type" value="Genomic_DNA"/>
</dbReference>
<dbReference type="RefSeq" id="XP_001903490.1">
    <property type="nucleotide sequence ID" value="XM_001903455.1"/>
</dbReference>
<dbReference type="SMR" id="B2ACV0"/>
<dbReference type="STRING" id="515849.B2ACV0"/>
<dbReference type="GeneID" id="6187609"/>
<dbReference type="KEGG" id="pan:PODANSg505"/>
<dbReference type="eggNOG" id="ENOG502SKH9">
    <property type="taxonomic scope" value="Eukaryota"/>
</dbReference>
<dbReference type="HOGENOM" id="CLU_090716_0_0_1"/>
<dbReference type="InParanoid" id="B2ACV0"/>
<dbReference type="OrthoDB" id="3446116at2759"/>
<dbReference type="UniPathway" id="UPA00562">
    <property type="reaction ID" value="UER00621"/>
</dbReference>
<dbReference type="Proteomes" id="UP000001197">
    <property type="component" value="Chromosome 3"/>
</dbReference>
<dbReference type="GO" id="GO:0051907">
    <property type="term" value="F:S-(hydroxymethyl)glutathione synthase activity"/>
    <property type="evidence" value="ECO:0007669"/>
    <property type="project" value="UniProtKB-UniRule"/>
</dbReference>
<dbReference type="GO" id="GO:0008270">
    <property type="term" value="F:zinc ion binding"/>
    <property type="evidence" value="ECO:0007669"/>
    <property type="project" value="UniProtKB-UniRule"/>
</dbReference>
<dbReference type="GO" id="GO:0046294">
    <property type="term" value="P:formaldehyde catabolic process"/>
    <property type="evidence" value="ECO:0007669"/>
    <property type="project" value="UniProtKB-UniRule"/>
</dbReference>
<dbReference type="Gene3D" id="3.90.1590.10">
    <property type="entry name" value="glutathione-dependent formaldehyde- activating enzyme (gfa)"/>
    <property type="match status" value="1"/>
</dbReference>
<dbReference type="HAMAP" id="MF_00723">
    <property type="entry name" value="Formald_GSH"/>
    <property type="match status" value="1"/>
</dbReference>
<dbReference type="InterPro" id="IPR006913">
    <property type="entry name" value="CENP-V/GFA"/>
</dbReference>
<dbReference type="InterPro" id="IPR014185">
    <property type="entry name" value="Formald_GSH"/>
</dbReference>
<dbReference type="InterPro" id="IPR011057">
    <property type="entry name" value="Mss4-like_sf"/>
</dbReference>
<dbReference type="NCBIfam" id="TIGR02820">
    <property type="entry name" value="formald_GSH"/>
    <property type="match status" value="1"/>
</dbReference>
<dbReference type="NCBIfam" id="NF003829">
    <property type="entry name" value="PRK05417.1"/>
    <property type="match status" value="1"/>
</dbReference>
<dbReference type="PANTHER" id="PTHR33337:SF40">
    <property type="entry name" value="CENP-V_GFA DOMAIN-CONTAINING PROTEIN-RELATED"/>
    <property type="match status" value="1"/>
</dbReference>
<dbReference type="PANTHER" id="PTHR33337">
    <property type="entry name" value="GFA DOMAIN-CONTAINING PROTEIN"/>
    <property type="match status" value="1"/>
</dbReference>
<dbReference type="Pfam" id="PF04828">
    <property type="entry name" value="GFA"/>
    <property type="match status" value="1"/>
</dbReference>
<dbReference type="PIRSF" id="PIRSF033318">
    <property type="entry name" value="Formald_GSH"/>
    <property type="match status" value="1"/>
</dbReference>
<dbReference type="SUPFAM" id="SSF51316">
    <property type="entry name" value="Mss4-like"/>
    <property type="match status" value="1"/>
</dbReference>
<dbReference type="PROSITE" id="PS51891">
    <property type="entry name" value="CENP_V_GFA"/>
    <property type="match status" value="1"/>
</dbReference>
<sequence>MVSLHPLLDNGITPGSDSFPGGTLKCLCPSFPVEITLTTNVAHNHACGCSKCWKPAGALFSIVGVVPRDELSVTANGDKLAIVDESAVIQRYACKECGTHLYRRIEKEHPFYGLDFVHAELSEEEGWQEPQFAAFVSSVIEQGFDPAKIGEVRARFRELGLETYDSLSPPLMDAIAAWTGRKNGKYDLHSWLDCERRKGGGGGGQPGGVVCRL</sequence>
<gene>
    <name type="ordered locus">Pa_3_11350</name>
    <name type="ORF">PODANS_3_11350</name>
</gene>
<comment type="function">
    <text evidence="1">Catalyzes the condensation of formaldehyde and glutathione to S-hydroxymethylglutathione.</text>
</comment>
<comment type="catalytic activity">
    <reaction evidence="1">
        <text>S-(hydroxymethyl)glutathione = glutathione + formaldehyde</text>
        <dbReference type="Rhea" id="RHEA:22488"/>
        <dbReference type="ChEBI" id="CHEBI:16842"/>
        <dbReference type="ChEBI" id="CHEBI:57925"/>
        <dbReference type="ChEBI" id="CHEBI:58758"/>
        <dbReference type="EC" id="4.4.1.22"/>
    </reaction>
</comment>
<comment type="cofactor">
    <cofactor evidence="1 2">
        <name>Zn(2+)</name>
        <dbReference type="ChEBI" id="CHEBI:29105"/>
    </cofactor>
    <text evidence="1 2">Binds 2 Zn(2+) ions per subunit.</text>
</comment>
<comment type="pathway">
    <text evidence="1">One-carbon metabolism; formaldehyde degradation; formate from formaldehyde (glutathione route): step 1/3.</text>
</comment>
<comment type="similarity">
    <text evidence="3">Belongs to the Gfa family.</text>
</comment>
<comment type="sequence caution" evidence="3">
    <conflict type="erroneous initiation">
        <sequence resource="EMBL-CDS" id="CAP61265"/>
    </conflict>
    <text>Extended N-terminus.</text>
</comment>
<comment type="sequence caution" evidence="3">
    <conflict type="frameshift">
        <sequence resource="EMBL-CDS" id="CAP61265"/>
    </conflict>
</comment>
<comment type="sequence caution" evidence="3">
    <conflict type="erroneous initiation">
        <sequence resource="EMBL-CDS" id="CDP27619"/>
    </conflict>
    <text>Extended N-terminus.</text>
</comment>
<proteinExistence type="inferred from homology"/>
<reference key="1">
    <citation type="journal article" date="2008" name="Genome Biol.">
        <title>The genome sequence of the model ascomycete fungus Podospora anserina.</title>
        <authorList>
            <person name="Espagne E."/>
            <person name="Lespinet O."/>
            <person name="Malagnac F."/>
            <person name="Da Silva C."/>
            <person name="Jaillon O."/>
            <person name="Porcel B.M."/>
            <person name="Couloux A."/>
            <person name="Aury J.-M."/>
            <person name="Segurens B."/>
            <person name="Poulain J."/>
            <person name="Anthouard V."/>
            <person name="Grossetete S."/>
            <person name="Khalili H."/>
            <person name="Coppin E."/>
            <person name="Dequard-Chablat M."/>
            <person name="Picard M."/>
            <person name="Contamine V."/>
            <person name="Arnaise S."/>
            <person name="Bourdais A."/>
            <person name="Berteaux-Lecellier V."/>
            <person name="Gautheret D."/>
            <person name="de Vries R.P."/>
            <person name="Battaglia E."/>
            <person name="Coutinho P.M."/>
            <person name="Danchin E.G.J."/>
            <person name="Henrissat B."/>
            <person name="El Khoury R."/>
            <person name="Sainsard-Chanet A."/>
            <person name="Boivin A."/>
            <person name="Pinan-Lucarre B."/>
            <person name="Sellem C.H."/>
            <person name="Debuchy R."/>
            <person name="Wincker P."/>
            <person name="Weissenbach J."/>
            <person name="Silar P."/>
        </authorList>
    </citation>
    <scope>NUCLEOTIDE SEQUENCE [LARGE SCALE GENOMIC DNA]</scope>
    <source>
        <strain>S / ATCC MYA-4624 / DSM 980 / FGSC 10383</strain>
    </source>
</reference>
<reference key="2">
    <citation type="journal article" date="2014" name="Genetics">
        <title>Maintaining two mating types: Structure of the mating type locus and its role in heterokaryosis in Podospora anserina.</title>
        <authorList>
            <person name="Grognet P."/>
            <person name="Bidard F."/>
            <person name="Kuchly C."/>
            <person name="Tong L.C.H."/>
            <person name="Coppin E."/>
            <person name="Benkhali J.A."/>
            <person name="Couloux A."/>
            <person name="Wincker P."/>
            <person name="Debuchy R."/>
            <person name="Silar P."/>
        </authorList>
    </citation>
    <scope>GENOME REANNOTATION</scope>
    <source>
        <strain>S / ATCC MYA-4624 / DSM 980 / FGSC 10383</strain>
    </source>
</reference>
<keyword id="KW-0456">Lyase</keyword>
<keyword id="KW-0479">Metal-binding</keyword>
<keyword id="KW-1185">Reference proteome</keyword>
<keyword id="KW-0862">Zinc</keyword>
<organism>
    <name type="scientific">Podospora anserina (strain S / ATCC MYA-4624 / DSM 980 / FGSC 10383)</name>
    <name type="common">Pleurage anserina</name>
    <dbReference type="NCBI Taxonomy" id="515849"/>
    <lineage>
        <taxon>Eukaryota</taxon>
        <taxon>Fungi</taxon>
        <taxon>Dikarya</taxon>
        <taxon>Ascomycota</taxon>
        <taxon>Pezizomycotina</taxon>
        <taxon>Sordariomycetes</taxon>
        <taxon>Sordariomycetidae</taxon>
        <taxon>Sordariales</taxon>
        <taxon>Podosporaceae</taxon>
        <taxon>Podospora</taxon>
        <taxon>Podospora anserina</taxon>
    </lineage>
</organism>